<keyword id="KW-0004">4Fe-4S</keyword>
<keyword id="KW-0963">Cytoplasm</keyword>
<keyword id="KW-0408">Iron</keyword>
<keyword id="KW-0411">Iron-sulfur</keyword>
<keyword id="KW-0479">Metal-binding</keyword>
<keyword id="KW-1185">Reference proteome</keyword>
<keyword id="KW-0949">S-adenosyl-L-methionine</keyword>
<keyword id="KW-0808">Transferase</keyword>
<reference key="1">
    <citation type="journal article" date="2003" name="J. Bacteriol.">
        <title>Complete genome sequence of the oral pathogenic bacterium Porphyromonas gingivalis strain W83.</title>
        <authorList>
            <person name="Nelson K.E."/>
            <person name="Fleischmann R.D."/>
            <person name="DeBoy R.T."/>
            <person name="Paulsen I.T."/>
            <person name="Fouts D.E."/>
            <person name="Eisen J.A."/>
            <person name="Daugherty S.C."/>
            <person name="Dodson R.J."/>
            <person name="Durkin A.S."/>
            <person name="Gwinn M.L."/>
            <person name="Haft D.H."/>
            <person name="Kolonay J.F."/>
            <person name="Nelson W.C."/>
            <person name="Mason T.M."/>
            <person name="Tallon L."/>
            <person name="Gray J."/>
            <person name="Granger D."/>
            <person name="Tettelin H."/>
            <person name="Dong H."/>
            <person name="Galvin J.L."/>
            <person name="Duncan M.J."/>
            <person name="Dewhirst F.E."/>
            <person name="Fraser C.M."/>
        </authorList>
    </citation>
    <scope>NUCLEOTIDE SEQUENCE [LARGE SCALE GENOMIC DNA]</scope>
    <source>
        <strain>ATCC BAA-308 / W83</strain>
    </source>
</reference>
<proteinExistence type="inferred from homology"/>
<dbReference type="EC" id="2.8.4.4" evidence="1"/>
<dbReference type="EMBL" id="AE015924">
    <property type="protein sequence ID" value="AAQ65391.1"/>
    <property type="molecule type" value="Genomic_DNA"/>
</dbReference>
<dbReference type="RefSeq" id="WP_010955935.1">
    <property type="nucleotide sequence ID" value="NC_002950.2"/>
</dbReference>
<dbReference type="SMR" id="Q7MXM3"/>
<dbReference type="STRING" id="242619.PG_0150"/>
<dbReference type="EnsemblBacteria" id="AAQ65391">
    <property type="protein sequence ID" value="AAQ65391"/>
    <property type="gene ID" value="PG_0150"/>
</dbReference>
<dbReference type="KEGG" id="pgi:PG_0150"/>
<dbReference type="PATRIC" id="fig|242619.8.peg.139"/>
<dbReference type="eggNOG" id="COG0621">
    <property type="taxonomic scope" value="Bacteria"/>
</dbReference>
<dbReference type="HOGENOM" id="CLU_018697_0_1_10"/>
<dbReference type="BioCyc" id="PGIN242619:G1G02-142-MONOMER"/>
<dbReference type="Proteomes" id="UP000000588">
    <property type="component" value="Chromosome"/>
</dbReference>
<dbReference type="GO" id="GO:0005829">
    <property type="term" value="C:cytosol"/>
    <property type="evidence" value="ECO:0007669"/>
    <property type="project" value="TreeGrafter"/>
</dbReference>
<dbReference type="GO" id="GO:0051539">
    <property type="term" value="F:4 iron, 4 sulfur cluster binding"/>
    <property type="evidence" value="ECO:0007669"/>
    <property type="project" value="UniProtKB-UniRule"/>
</dbReference>
<dbReference type="GO" id="GO:0035599">
    <property type="term" value="F:aspartic acid methylthiotransferase activity"/>
    <property type="evidence" value="ECO:0007669"/>
    <property type="project" value="TreeGrafter"/>
</dbReference>
<dbReference type="GO" id="GO:0046872">
    <property type="term" value="F:metal ion binding"/>
    <property type="evidence" value="ECO:0007669"/>
    <property type="project" value="UniProtKB-KW"/>
</dbReference>
<dbReference type="GO" id="GO:0103039">
    <property type="term" value="F:protein methylthiotransferase activity"/>
    <property type="evidence" value="ECO:0007669"/>
    <property type="project" value="UniProtKB-EC"/>
</dbReference>
<dbReference type="GO" id="GO:0006400">
    <property type="term" value="P:tRNA modification"/>
    <property type="evidence" value="ECO:0007669"/>
    <property type="project" value="InterPro"/>
</dbReference>
<dbReference type="CDD" id="cd01335">
    <property type="entry name" value="Radical_SAM"/>
    <property type="match status" value="1"/>
</dbReference>
<dbReference type="FunFam" id="3.80.30.20:FF:000001">
    <property type="entry name" value="tRNA-2-methylthio-N(6)-dimethylallyladenosine synthase 2"/>
    <property type="match status" value="1"/>
</dbReference>
<dbReference type="Gene3D" id="3.40.50.12160">
    <property type="entry name" value="Methylthiotransferase, N-terminal domain"/>
    <property type="match status" value="1"/>
</dbReference>
<dbReference type="Gene3D" id="2.40.50.140">
    <property type="entry name" value="Nucleic acid-binding proteins"/>
    <property type="match status" value="1"/>
</dbReference>
<dbReference type="Gene3D" id="3.80.30.20">
    <property type="entry name" value="tm_1862 like domain"/>
    <property type="match status" value="1"/>
</dbReference>
<dbReference type="HAMAP" id="MF_01865">
    <property type="entry name" value="MTTase_RimO"/>
    <property type="match status" value="1"/>
</dbReference>
<dbReference type="InterPro" id="IPR006638">
    <property type="entry name" value="Elp3/MiaA/NifB-like_rSAM"/>
</dbReference>
<dbReference type="InterPro" id="IPR005839">
    <property type="entry name" value="Methylthiotransferase"/>
</dbReference>
<dbReference type="InterPro" id="IPR020612">
    <property type="entry name" value="Methylthiotransferase_CS"/>
</dbReference>
<dbReference type="InterPro" id="IPR013848">
    <property type="entry name" value="Methylthiotransferase_N"/>
</dbReference>
<dbReference type="InterPro" id="IPR038135">
    <property type="entry name" value="Methylthiotransferase_N_sf"/>
</dbReference>
<dbReference type="InterPro" id="IPR012340">
    <property type="entry name" value="NA-bd_OB-fold"/>
</dbReference>
<dbReference type="InterPro" id="IPR005840">
    <property type="entry name" value="Ribosomal_uS12_MeSTrfase_RimO"/>
</dbReference>
<dbReference type="InterPro" id="IPR007197">
    <property type="entry name" value="rSAM"/>
</dbReference>
<dbReference type="InterPro" id="IPR023404">
    <property type="entry name" value="rSAM_horseshoe"/>
</dbReference>
<dbReference type="InterPro" id="IPR002792">
    <property type="entry name" value="TRAM_dom"/>
</dbReference>
<dbReference type="NCBIfam" id="TIGR01125">
    <property type="entry name" value="30S ribosomal protein S12 methylthiotransferase RimO"/>
    <property type="match status" value="1"/>
</dbReference>
<dbReference type="NCBIfam" id="TIGR00089">
    <property type="entry name" value="MiaB/RimO family radical SAM methylthiotransferase"/>
    <property type="match status" value="1"/>
</dbReference>
<dbReference type="PANTHER" id="PTHR43837">
    <property type="entry name" value="RIBOSOMAL PROTEIN S12 METHYLTHIOTRANSFERASE RIMO"/>
    <property type="match status" value="1"/>
</dbReference>
<dbReference type="PANTHER" id="PTHR43837:SF1">
    <property type="entry name" value="RIBOSOMAL PROTEIN US12 METHYLTHIOTRANSFERASE RIMO"/>
    <property type="match status" value="1"/>
</dbReference>
<dbReference type="Pfam" id="PF04055">
    <property type="entry name" value="Radical_SAM"/>
    <property type="match status" value="1"/>
</dbReference>
<dbReference type="Pfam" id="PF18693">
    <property type="entry name" value="TRAM_2"/>
    <property type="match status" value="1"/>
</dbReference>
<dbReference type="Pfam" id="PF00919">
    <property type="entry name" value="UPF0004"/>
    <property type="match status" value="1"/>
</dbReference>
<dbReference type="SFLD" id="SFLDG01082">
    <property type="entry name" value="B12-binding_domain_containing"/>
    <property type="match status" value="1"/>
</dbReference>
<dbReference type="SFLD" id="SFLDS00029">
    <property type="entry name" value="Radical_SAM"/>
    <property type="match status" value="1"/>
</dbReference>
<dbReference type="SFLD" id="SFLDF00274">
    <property type="entry name" value="ribosomal_protein_S12_methylth"/>
    <property type="match status" value="1"/>
</dbReference>
<dbReference type="SMART" id="SM00729">
    <property type="entry name" value="Elp3"/>
    <property type="match status" value="1"/>
</dbReference>
<dbReference type="SUPFAM" id="SSF102114">
    <property type="entry name" value="Radical SAM enzymes"/>
    <property type="match status" value="1"/>
</dbReference>
<dbReference type="PROSITE" id="PS51449">
    <property type="entry name" value="MTTASE_N"/>
    <property type="match status" value="1"/>
</dbReference>
<dbReference type="PROSITE" id="PS01278">
    <property type="entry name" value="MTTASE_RADICAL"/>
    <property type="match status" value="1"/>
</dbReference>
<dbReference type="PROSITE" id="PS51918">
    <property type="entry name" value="RADICAL_SAM"/>
    <property type="match status" value="1"/>
</dbReference>
<dbReference type="PROSITE" id="PS50926">
    <property type="entry name" value="TRAM"/>
    <property type="match status" value="1"/>
</dbReference>
<organism>
    <name type="scientific">Porphyromonas gingivalis (strain ATCC BAA-308 / W83)</name>
    <dbReference type="NCBI Taxonomy" id="242619"/>
    <lineage>
        <taxon>Bacteria</taxon>
        <taxon>Pseudomonadati</taxon>
        <taxon>Bacteroidota</taxon>
        <taxon>Bacteroidia</taxon>
        <taxon>Bacteroidales</taxon>
        <taxon>Porphyromonadaceae</taxon>
        <taxon>Porphyromonas</taxon>
    </lineage>
</organism>
<evidence type="ECO:0000255" key="1">
    <source>
        <dbReference type="HAMAP-Rule" id="MF_01865"/>
    </source>
</evidence>
<evidence type="ECO:0000255" key="2">
    <source>
        <dbReference type="PROSITE-ProRule" id="PRU01266"/>
    </source>
</evidence>
<accession>Q7MXM3</accession>
<name>RIMO_PORGI</name>
<comment type="function">
    <text evidence="1">Catalyzes the methylthiolation of an aspartic acid residue of ribosomal protein uS12.</text>
</comment>
<comment type="catalytic activity">
    <reaction evidence="1">
        <text>L-aspartate(89)-[ribosomal protein uS12]-hydrogen + (sulfur carrier)-SH + AH2 + 2 S-adenosyl-L-methionine = 3-methylsulfanyl-L-aspartate(89)-[ribosomal protein uS12]-hydrogen + (sulfur carrier)-H + 5'-deoxyadenosine + L-methionine + A + S-adenosyl-L-homocysteine + 2 H(+)</text>
        <dbReference type="Rhea" id="RHEA:37087"/>
        <dbReference type="Rhea" id="RHEA-COMP:10460"/>
        <dbReference type="Rhea" id="RHEA-COMP:10461"/>
        <dbReference type="Rhea" id="RHEA-COMP:14737"/>
        <dbReference type="Rhea" id="RHEA-COMP:14739"/>
        <dbReference type="ChEBI" id="CHEBI:13193"/>
        <dbReference type="ChEBI" id="CHEBI:15378"/>
        <dbReference type="ChEBI" id="CHEBI:17319"/>
        <dbReference type="ChEBI" id="CHEBI:17499"/>
        <dbReference type="ChEBI" id="CHEBI:29917"/>
        <dbReference type="ChEBI" id="CHEBI:29961"/>
        <dbReference type="ChEBI" id="CHEBI:57844"/>
        <dbReference type="ChEBI" id="CHEBI:57856"/>
        <dbReference type="ChEBI" id="CHEBI:59789"/>
        <dbReference type="ChEBI" id="CHEBI:64428"/>
        <dbReference type="ChEBI" id="CHEBI:73599"/>
        <dbReference type="EC" id="2.8.4.4"/>
    </reaction>
</comment>
<comment type="cofactor">
    <cofactor evidence="1">
        <name>[4Fe-4S] cluster</name>
        <dbReference type="ChEBI" id="CHEBI:49883"/>
    </cofactor>
    <text evidence="1">Binds 2 [4Fe-4S] clusters. One cluster is coordinated with 3 cysteines and an exchangeable S-adenosyl-L-methionine.</text>
</comment>
<comment type="subcellular location">
    <subcellularLocation>
        <location evidence="1">Cytoplasm</location>
    </subcellularLocation>
</comment>
<comment type="similarity">
    <text evidence="1">Belongs to the methylthiotransferase family. RimO subfamily.</text>
</comment>
<sequence length="434" mass="49914">MRRNRVDVITLGCSKNLVDSEVLMRQFLSNGYTVHHDPASVCGEIVVVNTCGFIGDAQEESVNTILEMVEAKKAGRIGSLYVMGCLSERFREDLKKEIPEVDAYYGKFDWKQLISHLGKSYYAEAENRRKLTTPRHYAYLKISEGCDRSCSYCAIPIITGRHRSRPMEDLVEEVRMLVKHGTREFQLIAQDLTFYGLDLYGANRLAELTARLSDIKGVEWLRLHYAYPAQFPLDLLPVMRERPNVCKYLDMALQHISDPMLGRMRRRITKAETYELIERIRTEVPGIHLRTTLMTGHPGETERDFEELLQFVRDIRFERLGAFTYSHESGTYCDKNYQDDIPESVKQERLGELMAVQERISAAHNEAKIGSRLHVVIDRAEDGFYVGRTEYDSPEVDPEVLIPFVSGQELNPGRFYMAEVTGAEPFDLYARIVD</sequence>
<gene>
    <name evidence="1" type="primary">rimO</name>
    <name type="ordered locus">PG_0150</name>
</gene>
<protein>
    <recommendedName>
        <fullName evidence="1">Ribosomal protein uS12 methylthiotransferase RimO</fullName>
        <shortName evidence="1">uS12 MTTase</shortName>
        <shortName evidence="1">uS12 methylthiotransferase</shortName>
        <ecNumber evidence="1">2.8.4.4</ecNumber>
    </recommendedName>
    <alternativeName>
        <fullName evidence="1">Ribosomal protein uS12 (aspartate-C(3))-methylthiotransferase</fullName>
    </alternativeName>
    <alternativeName>
        <fullName evidence="1">Ribosome maturation factor RimO</fullName>
    </alternativeName>
</protein>
<feature type="chain" id="PRO_0000374923" description="Ribosomal protein uS12 methylthiotransferase RimO">
    <location>
        <begin position="1"/>
        <end position="434"/>
    </location>
</feature>
<feature type="domain" description="MTTase N-terminal" evidence="1">
    <location>
        <begin position="4"/>
        <end position="122"/>
    </location>
</feature>
<feature type="domain" description="Radical SAM core" evidence="2">
    <location>
        <begin position="132"/>
        <end position="363"/>
    </location>
</feature>
<feature type="domain" description="TRAM" evidence="1">
    <location>
        <begin position="366"/>
        <end position="434"/>
    </location>
</feature>
<feature type="binding site" evidence="1">
    <location>
        <position position="13"/>
    </location>
    <ligand>
        <name>[4Fe-4S] cluster</name>
        <dbReference type="ChEBI" id="CHEBI:49883"/>
        <label>1</label>
    </ligand>
</feature>
<feature type="binding site" evidence="1">
    <location>
        <position position="51"/>
    </location>
    <ligand>
        <name>[4Fe-4S] cluster</name>
        <dbReference type="ChEBI" id="CHEBI:49883"/>
        <label>1</label>
    </ligand>
</feature>
<feature type="binding site" evidence="1">
    <location>
        <position position="85"/>
    </location>
    <ligand>
        <name>[4Fe-4S] cluster</name>
        <dbReference type="ChEBI" id="CHEBI:49883"/>
        <label>1</label>
    </ligand>
</feature>
<feature type="binding site" evidence="1">
    <location>
        <position position="146"/>
    </location>
    <ligand>
        <name>[4Fe-4S] cluster</name>
        <dbReference type="ChEBI" id="CHEBI:49883"/>
        <label>2</label>
        <note>4Fe-4S-S-AdoMet</note>
    </ligand>
</feature>
<feature type="binding site" evidence="1">
    <location>
        <position position="150"/>
    </location>
    <ligand>
        <name>[4Fe-4S] cluster</name>
        <dbReference type="ChEBI" id="CHEBI:49883"/>
        <label>2</label>
        <note>4Fe-4S-S-AdoMet</note>
    </ligand>
</feature>
<feature type="binding site" evidence="1">
    <location>
        <position position="153"/>
    </location>
    <ligand>
        <name>[4Fe-4S] cluster</name>
        <dbReference type="ChEBI" id="CHEBI:49883"/>
        <label>2</label>
        <note>4Fe-4S-S-AdoMet</note>
    </ligand>
</feature>